<accession>Q9KGH5</accession>
<organism>
    <name type="scientific">Halalkalibacterium halodurans (strain ATCC BAA-125 / DSM 18197 / FERM 7344 / JCM 9153 / C-125)</name>
    <name type="common">Bacillus halodurans</name>
    <dbReference type="NCBI Taxonomy" id="272558"/>
    <lineage>
        <taxon>Bacteria</taxon>
        <taxon>Bacillati</taxon>
        <taxon>Bacillota</taxon>
        <taxon>Bacilli</taxon>
        <taxon>Bacillales</taxon>
        <taxon>Bacillaceae</taxon>
        <taxon>Halalkalibacterium (ex Joshi et al. 2022)</taxon>
    </lineage>
</organism>
<protein>
    <recommendedName>
        <fullName evidence="1">Type III pantothenate kinase</fullName>
        <ecNumber evidence="1">2.7.1.33</ecNumber>
    </recommendedName>
    <alternativeName>
        <fullName evidence="1">PanK-III</fullName>
    </alternativeName>
    <alternativeName>
        <fullName evidence="1">Pantothenic acid kinase</fullName>
    </alternativeName>
</protein>
<comment type="function">
    <text evidence="1">Catalyzes the phosphorylation of pantothenate (Pan), the first step in CoA biosynthesis.</text>
</comment>
<comment type="catalytic activity">
    <reaction evidence="1">
        <text>(R)-pantothenate + ATP = (R)-4'-phosphopantothenate + ADP + H(+)</text>
        <dbReference type="Rhea" id="RHEA:16373"/>
        <dbReference type="ChEBI" id="CHEBI:10986"/>
        <dbReference type="ChEBI" id="CHEBI:15378"/>
        <dbReference type="ChEBI" id="CHEBI:29032"/>
        <dbReference type="ChEBI" id="CHEBI:30616"/>
        <dbReference type="ChEBI" id="CHEBI:456216"/>
        <dbReference type="EC" id="2.7.1.33"/>
    </reaction>
</comment>
<comment type="cofactor">
    <cofactor evidence="1">
        <name>NH4(+)</name>
        <dbReference type="ChEBI" id="CHEBI:28938"/>
    </cofactor>
    <cofactor evidence="1">
        <name>K(+)</name>
        <dbReference type="ChEBI" id="CHEBI:29103"/>
    </cofactor>
    <text evidence="1">A monovalent cation. Ammonium or potassium.</text>
</comment>
<comment type="pathway">
    <text evidence="1">Cofactor biosynthesis; coenzyme A biosynthesis; CoA from (R)-pantothenate: step 1/5.</text>
</comment>
<comment type="subunit">
    <text evidence="1">Homodimer.</text>
</comment>
<comment type="subcellular location">
    <subcellularLocation>
        <location evidence="1">Cytoplasm</location>
    </subcellularLocation>
</comment>
<comment type="similarity">
    <text evidence="1">Belongs to the type III pantothenate kinase family.</text>
</comment>
<keyword id="KW-0067">ATP-binding</keyword>
<keyword id="KW-0173">Coenzyme A biosynthesis</keyword>
<keyword id="KW-0963">Cytoplasm</keyword>
<keyword id="KW-0418">Kinase</keyword>
<keyword id="KW-0479">Metal-binding</keyword>
<keyword id="KW-0547">Nucleotide-binding</keyword>
<keyword id="KW-0630">Potassium</keyword>
<keyword id="KW-1185">Reference proteome</keyword>
<keyword id="KW-0808">Transferase</keyword>
<sequence length="254" mass="27907">MILVIDVGNTNTVLGVYQDETLVHHWRLATSRQKTEDEYAMTVRSLFDHAGLQFQDIDGIVISSVVPPMMFSLEQMCKKYFHVTPMIIGPGIKTGLNIKYDNPKEVGADRIVNAVAAIELYGYPAIVVDFGTATTYCLINEKKQYAGGVIAPGIMISTEALYHRASKLPRIEIAKPKQVVGTNTIDSMQSGIFYGYVSQVDGVVKRMKAQAESEPKVIATGGLAKLIGTESETIDVIDSFLTLKGLQLIYKKNV</sequence>
<gene>
    <name evidence="1" type="primary">coaX</name>
    <name type="ordered locus">BH0086</name>
</gene>
<reference key="1">
    <citation type="journal article" date="2000" name="Nucleic Acids Res.">
        <title>Complete genome sequence of the alkaliphilic bacterium Bacillus halodurans and genomic sequence comparison with Bacillus subtilis.</title>
        <authorList>
            <person name="Takami H."/>
            <person name="Nakasone K."/>
            <person name="Takaki Y."/>
            <person name="Maeno G."/>
            <person name="Sasaki R."/>
            <person name="Masui N."/>
            <person name="Fuji F."/>
            <person name="Hirama C."/>
            <person name="Nakamura Y."/>
            <person name="Ogasawara N."/>
            <person name="Kuhara S."/>
            <person name="Horikoshi K."/>
        </authorList>
    </citation>
    <scope>NUCLEOTIDE SEQUENCE [LARGE SCALE GENOMIC DNA]</scope>
    <source>
        <strain>ATCC BAA-125 / DSM 18197 / FERM 7344 / JCM 9153 / C-125</strain>
    </source>
</reference>
<dbReference type="EC" id="2.7.1.33" evidence="1"/>
<dbReference type="EMBL" id="BA000004">
    <property type="protein sequence ID" value="BAB03805.1"/>
    <property type="molecule type" value="Genomic_DNA"/>
</dbReference>
<dbReference type="PIR" id="F83660">
    <property type="entry name" value="F83660"/>
</dbReference>
<dbReference type="RefSeq" id="WP_010896270.1">
    <property type="nucleotide sequence ID" value="NC_002570.2"/>
</dbReference>
<dbReference type="SMR" id="Q9KGH5"/>
<dbReference type="STRING" id="272558.gene:10725909"/>
<dbReference type="GeneID" id="87595611"/>
<dbReference type="KEGG" id="bha:BH0086"/>
<dbReference type="eggNOG" id="COG1521">
    <property type="taxonomic scope" value="Bacteria"/>
</dbReference>
<dbReference type="HOGENOM" id="CLU_066627_1_0_9"/>
<dbReference type="OrthoDB" id="9804707at2"/>
<dbReference type="UniPathway" id="UPA00241">
    <property type="reaction ID" value="UER00352"/>
</dbReference>
<dbReference type="Proteomes" id="UP000001258">
    <property type="component" value="Chromosome"/>
</dbReference>
<dbReference type="GO" id="GO:0005737">
    <property type="term" value="C:cytoplasm"/>
    <property type="evidence" value="ECO:0007669"/>
    <property type="project" value="UniProtKB-SubCell"/>
</dbReference>
<dbReference type="GO" id="GO:0005524">
    <property type="term" value="F:ATP binding"/>
    <property type="evidence" value="ECO:0007669"/>
    <property type="project" value="UniProtKB-UniRule"/>
</dbReference>
<dbReference type="GO" id="GO:0046872">
    <property type="term" value="F:metal ion binding"/>
    <property type="evidence" value="ECO:0007669"/>
    <property type="project" value="UniProtKB-KW"/>
</dbReference>
<dbReference type="GO" id="GO:0004594">
    <property type="term" value="F:pantothenate kinase activity"/>
    <property type="evidence" value="ECO:0007669"/>
    <property type="project" value="UniProtKB-UniRule"/>
</dbReference>
<dbReference type="GO" id="GO:0015937">
    <property type="term" value="P:coenzyme A biosynthetic process"/>
    <property type="evidence" value="ECO:0007669"/>
    <property type="project" value="UniProtKB-UniRule"/>
</dbReference>
<dbReference type="CDD" id="cd24015">
    <property type="entry name" value="ASKHA_NBD_PanK-III"/>
    <property type="match status" value="1"/>
</dbReference>
<dbReference type="Gene3D" id="3.30.420.40">
    <property type="match status" value="2"/>
</dbReference>
<dbReference type="HAMAP" id="MF_01274">
    <property type="entry name" value="Pantothen_kinase_3"/>
    <property type="match status" value="1"/>
</dbReference>
<dbReference type="InterPro" id="IPR043129">
    <property type="entry name" value="ATPase_NBD"/>
</dbReference>
<dbReference type="InterPro" id="IPR004619">
    <property type="entry name" value="Type_III_PanK"/>
</dbReference>
<dbReference type="NCBIfam" id="TIGR00671">
    <property type="entry name" value="baf"/>
    <property type="match status" value="1"/>
</dbReference>
<dbReference type="NCBIfam" id="NF009843">
    <property type="entry name" value="PRK13318.1-1"/>
    <property type="match status" value="1"/>
</dbReference>
<dbReference type="NCBIfam" id="NF009847">
    <property type="entry name" value="PRK13318.1-5"/>
    <property type="match status" value="1"/>
</dbReference>
<dbReference type="NCBIfam" id="NF009848">
    <property type="entry name" value="PRK13318.1-6"/>
    <property type="match status" value="1"/>
</dbReference>
<dbReference type="NCBIfam" id="NF009855">
    <property type="entry name" value="PRK13321.1"/>
    <property type="match status" value="1"/>
</dbReference>
<dbReference type="PANTHER" id="PTHR34265">
    <property type="entry name" value="TYPE III PANTOTHENATE KINASE"/>
    <property type="match status" value="1"/>
</dbReference>
<dbReference type="PANTHER" id="PTHR34265:SF1">
    <property type="entry name" value="TYPE III PANTOTHENATE KINASE"/>
    <property type="match status" value="1"/>
</dbReference>
<dbReference type="Pfam" id="PF03309">
    <property type="entry name" value="Pan_kinase"/>
    <property type="match status" value="1"/>
</dbReference>
<dbReference type="SUPFAM" id="SSF53067">
    <property type="entry name" value="Actin-like ATPase domain"/>
    <property type="match status" value="2"/>
</dbReference>
<proteinExistence type="inferred from homology"/>
<name>COAX_HALH5</name>
<evidence type="ECO:0000255" key="1">
    <source>
        <dbReference type="HAMAP-Rule" id="MF_01274"/>
    </source>
</evidence>
<feature type="chain" id="PRO_0000267496" description="Type III pantothenate kinase">
    <location>
        <begin position="1"/>
        <end position="254"/>
    </location>
</feature>
<feature type="active site" description="Proton acceptor" evidence="1">
    <location>
        <position position="109"/>
    </location>
</feature>
<feature type="binding site" evidence="1">
    <location>
        <begin position="6"/>
        <end position="13"/>
    </location>
    <ligand>
        <name>ATP</name>
        <dbReference type="ChEBI" id="CHEBI:30616"/>
    </ligand>
</feature>
<feature type="binding site" evidence="1">
    <location>
        <position position="100"/>
    </location>
    <ligand>
        <name>substrate</name>
    </ligand>
</feature>
<feature type="binding site" evidence="1">
    <location>
        <begin position="107"/>
        <end position="110"/>
    </location>
    <ligand>
        <name>substrate</name>
    </ligand>
</feature>
<feature type="binding site" evidence="1">
    <location>
        <position position="129"/>
    </location>
    <ligand>
        <name>K(+)</name>
        <dbReference type="ChEBI" id="CHEBI:29103"/>
    </ligand>
</feature>
<feature type="binding site" evidence="1">
    <location>
        <position position="132"/>
    </location>
    <ligand>
        <name>ATP</name>
        <dbReference type="ChEBI" id="CHEBI:30616"/>
    </ligand>
</feature>
<feature type="binding site" evidence="1">
    <location>
        <position position="184"/>
    </location>
    <ligand>
        <name>substrate</name>
    </ligand>
</feature>